<reference key="1">
    <citation type="journal article" date="1996" name="Biochem. Biophys. Res. Commun.">
        <title>Sequence analysis of four acidic beta-crystallin subunits of amphibian lenses: phylogenetic comparison between beta- and gamma-crystallins.</title>
        <authorList>
            <person name="Lu S.-F."/>
            <person name="Pan F.-M."/>
            <person name="Chiou S.-H."/>
        </authorList>
    </citation>
    <scope>NUCLEOTIDE SEQUENCE [MRNA]</scope>
    <source>
        <tissue>Lens</tissue>
    </source>
</reference>
<comment type="function">
    <text>Crystallins are the dominant structural components of the vertebrate eye lens.</text>
</comment>
<comment type="subunit">
    <text evidence="1">Homo/heterodimer, or complexes of higher-order. The structure of beta-crystallin oligomers seems to be stabilized through interactions between the N-terminal arms (By similarity).</text>
</comment>
<comment type="domain">
    <text>Has a two-domain beta-structure, folded into four very similar Greek key motifs.</text>
</comment>
<comment type="PTM">
    <text>The N-terminus is blocked.</text>
</comment>
<comment type="similarity">
    <text evidence="3">Belongs to the beta/gamma-crystallin family.</text>
</comment>
<organism>
    <name type="scientific">Aquarana catesbeiana</name>
    <name type="common">American bullfrog</name>
    <name type="synonym">Rana catesbeiana</name>
    <dbReference type="NCBI Taxonomy" id="8400"/>
    <lineage>
        <taxon>Eukaryota</taxon>
        <taxon>Metazoa</taxon>
        <taxon>Chordata</taxon>
        <taxon>Craniata</taxon>
        <taxon>Vertebrata</taxon>
        <taxon>Euteleostomi</taxon>
        <taxon>Amphibia</taxon>
        <taxon>Batrachia</taxon>
        <taxon>Anura</taxon>
        <taxon>Neobatrachia</taxon>
        <taxon>Ranoidea</taxon>
        <taxon>Ranidae</taxon>
        <taxon>Aquarana</taxon>
    </lineage>
</organism>
<feature type="chain" id="PRO_0000057536" description="Beta-crystallin A1-2">
    <location>
        <begin position="1"/>
        <end position="198"/>
    </location>
</feature>
<feature type="domain" description="Beta/gamma crystallin 'Greek key' 1" evidence="2">
    <location>
        <begin position="14"/>
        <end position="53"/>
    </location>
</feature>
<feature type="domain" description="Beta/gamma crystallin 'Greek key' 2" evidence="2">
    <location>
        <begin position="54"/>
        <end position="100"/>
    </location>
</feature>
<feature type="domain" description="Beta/gamma crystallin 'Greek key' 3" evidence="2">
    <location>
        <begin position="107"/>
        <end position="148"/>
    </location>
</feature>
<feature type="domain" description="Beta/gamma crystallin 'Greek key' 4" evidence="2">
    <location>
        <begin position="149"/>
        <end position="197"/>
    </location>
</feature>
<feature type="region of interest" description="N-terminal arm">
    <location>
        <begin position="1"/>
        <end position="13"/>
    </location>
</feature>
<feature type="region of interest" description="Connecting peptide">
    <location>
        <begin position="101"/>
        <end position="106"/>
    </location>
</feature>
<name>CRB12_AQUCT</name>
<keyword id="KW-0273">Eye lens protein</keyword>
<keyword id="KW-0677">Repeat</keyword>
<sequence>MAQINPLPVPLGPWKITVYDQENFQGKRMEFTSSCANIMECGFDNIRSLKVECGAWIGYEHTSFCGQQFVLERGEYPRWDAWSGSNAYHIERLMSFRPICSANHIESKLVIFEKENFVGPQWELCDDYPSLQAMGWGNNEVGSMKVQCGAWVCYQYPGYRGYQYILESDHHGGEYKHWREWGSHAQTFQIQSIRRIQQ</sequence>
<accession>Q91314</accession>
<proteinExistence type="evidence at transcript level"/>
<dbReference type="EMBL" id="X87760">
    <property type="protein sequence ID" value="CAA61034.1"/>
    <property type="molecule type" value="mRNA"/>
</dbReference>
<dbReference type="PIR" id="JC4705">
    <property type="entry name" value="S55512"/>
</dbReference>
<dbReference type="SMR" id="Q91314"/>
<dbReference type="GO" id="GO:0005212">
    <property type="term" value="F:structural constituent of eye lens"/>
    <property type="evidence" value="ECO:0007669"/>
    <property type="project" value="UniProtKB-KW"/>
</dbReference>
<dbReference type="GO" id="GO:0002088">
    <property type="term" value="P:lens development in camera-type eye"/>
    <property type="evidence" value="ECO:0007669"/>
    <property type="project" value="TreeGrafter"/>
</dbReference>
<dbReference type="GO" id="GO:0007601">
    <property type="term" value="P:visual perception"/>
    <property type="evidence" value="ECO:0007669"/>
    <property type="project" value="TreeGrafter"/>
</dbReference>
<dbReference type="FunFam" id="2.60.20.10:FF:000004">
    <property type="entry name" value="Crystallin beta A4"/>
    <property type="match status" value="1"/>
</dbReference>
<dbReference type="FunFam" id="2.60.20.10:FF:000002">
    <property type="entry name" value="Crystallin, beta B2"/>
    <property type="match status" value="1"/>
</dbReference>
<dbReference type="Gene3D" id="2.60.20.10">
    <property type="entry name" value="Crystallins"/>
    <property type="match status" value="2"/>
</dbReference>
<dbReference type="InterPro" id="IPR050252">
    <property type="entry name" value="Beta/Gamma-Crystallin"/>
</dbReference>
<dbReference type="InterPro" id="IPR001064">
    <property type="entry name" value="Beta/gamma_crystallin"/>
</dbReference>
<dbReference type="InterPro" id="IPR011024">
    <property type="entry name" value="G_crystallin-like"/>
</dbReference>
<dbReference type="PANTHER" id="PTHR11818:SF8">
    <property type="entry name" value="BETA-CRYSTALLIN A3"/>
    <property type="match status" value="1"/>
</dbReference>
<dbReference type="PANTHER" id="PTHR11818">
    <property type="entry name" value="BETA/GAMMA CRYSTALLIN"/>
    <property type="match status" value="1"/>
</dbReference>
<dbReference type="Pfam" id="PF00030">
    <property type="entry name" value="Crystall"/>
    <property type="match status" value="2"/>
</dbReference>
<dbReference type="PRINTS" id="PR01367">
    <property type="entry name" value="BGCRYSTALLIN"/>
</dbReference>
<dbReference type="SMART" id="SM00247">
    <property type="entry name" value="XTALbg"/>
    <property type="match status" value="2"/>
</dbReference>
<dbReference type="SUPFAM" id="SSF49695">
    <property type="entry name" value="gamma-Crystallin-like"/>
    <property type="match status" value="1"/>
</dbReference>
<dbReference type="PROSITE" id="PS50915">
    <property type="entry name" value="CRYSTALLIN_BETA_GAMMA"/>
    <property type="match status" value="4"/>
</dbReference>
<evidence type="ECO:0000250" key="1"/>
<evidence type="ECO:0000255" key="2">
    <source>
        <dbReference type="PROSITE-ProRule" id="PRU00028"/>
    </source>
</evidence>
<evidence type="ECO:0000305" key="3"/>
<protein>
    <recommendedName>
        <fullName>Beta-crystallin A1-2</fullName>
    </recommendedName>
</protein>